<sequence>MKKSLFCGVCLCALVAMGGTSFADIMVGVGAPLTGSQAAFGEQIKRGVEAAVAEANAKGGMNGEQITLVYGDDAADPKQGISVANKFVGDGVKFVIGHFNSGVSIPTSDIYAENGVLMIAPGTTNPTFTERELWNTFRTCRRDDKQGIVPGKYMADNYKDGKVAILHDKTPYGQGLADETKKKLNELGTKETLYEGVNVGEKDFSALIAKLKQAGVNVVYWGGLHPEAGLIIRQMADQGLKAQFISGDGIVSNELASIAGPAVEGTLNTFGPDPRNNPDNAELVKKFRDAGFEPEAYTFYAYAGVQSLVNAANAAGSNDPMEVATAMKEKGPFKTVLGDISFDAKGDPSLSPYVMFEWRKGEDGKYNYFQK</sequence>
<protein>
    <recommendedName>
        <fullName>Leu/Ile/Val-binding protein homolog 2</fullName>
    </recommendedName>
</protein>
<name>LIVB2_BRUA2</name>
<comment type="function">
    <text evidence="2">Component of an amino-acid transport system.</text>
</comment>
<comment type="similarity">
    <text evidence="2">Belongs to the leucine-binding protein family.</text>
</comment>
<comment type="sequence caution" evidence="2">
    <conflict type="erroneous initiation">
        <sequence resource="EMBL-CDS" id="CAJ11748"/>
    </conflict>
</comment>
<proteinExistence type="inferred from homology"/>
<accession>Q2YLG0</accession>
<organism>
    <name type="scientific">Brucella abortus (strain 2308)</name>
    <dbReference type="NCBI Taxonomy" id="359391"/>
    <lineage>
        <taxon>Bacteria</taxon>
        <taxon>Pseudomonadati</taxon>
        <taxon>Pseudomonadota</taxon>
        <taxon>Alphaproteobacteria</taxon>
        <taxon>Hyphomicrobiales</taxon>
        <taxon>Brucellaceae</taxon>
        <taxon>Brucella/Ochrobactrum group</taxon>
        <taxon>Brucella</taxon>
    </lineage>
</organism>
<evidence type="ECO:0000255" key="1"/>
<evidence type="ECO:0000305" key="2"/>
<keyword id="KW-0029">Amino-acid transport</keyword>
<keyword id="KW-1185">Reference proteome</keyword>
<keyword id="KW-0732">Signal</keyword>
<keyword id="KW-0813">Transport</keyword>
<gene>
    <name type="ordered locus">BAB1_1792</name>
</gene>
<feature type="signal peptide" evidence="1">
    <location>
        <begin position="1"/>
        <end position="23"/>
    </location>
</feature>
<feature type="chain" id="PRO_0000285732" description="Leu/Ile/Val-binding protein homolog 2">
    <location>
        <begin position="24"/>
        <end position="371"/>
    </location>
</feature>
<reference key="1">
    <citation type="journal article" date="2005" name="Infect. Immun.">
        <title>Whole-genome analyses of speciation events in pathogenic Brucellae.</title>
        <authorList>
            <person name="Chain P.S."/>
            <person name="Comerci D.J."/>
            <person name="Tolmasky M.E."/>
            <person name="Larimer F.W."/>
            <person name="Malfatti S.A."/>
            <person name="Vergez L.M."/>
            <person name="Aguero F."/>
            <person name="Land M.L."/>
            <person name="Ugalde R.A."/>
            <person name="Garcia E."/>
        </authorList>
    </citation>
    <scope>NUCLEOTIDE SEQUENCE [LARGE SCALE GENOMIC DNA]</scope>
    <source>
        <strain>2308</strain>
    </source>
</reference>
<dbReference type="EMBL" id="AM040264">
    <property type="protein sequence ID" value="CAJ11748.1"/>
    <property type="status" value="ALT_INIT"/>
    <property type="molecule type" value="Genomic_DNA"/>
</dbReference>
<dbReference type="RefSeq" id="WP_002966964.1">
    <property type="nucleotide sequence ID" value="NZ_KN046823.1"/>
</dbReference>
<dbReference type="SMR" id="Q2YLG0"/>
<dbReference type="STRING" id="359391.BAB1_1792"/>
<dbReference type="KEGG" id="bmf:BAB1_1792"/>
<dbReference type="PATRIC" id="fig|359391.11.peg.303"/>
<dbReference type="HOGENOM" id="CLU_027128_6_0_5"/>
<dbReference type="Proteomes" id="UP000002719">
    <property type="component" value="Chromosome I"/>
</dbReference>
<dbReference type="GO" id="GO:0006865">
    <property type="term" value="P:amino acid transport"/>
    <property type="evidence" value="ECO:0007669"/>
    <property type="project" value="UniProtKB-KW"/>
</dbReference>
<dbReference type="CDD" id="cd06342">
    <property type="entry name" value="PBP1_ABC_LIVBP-like"/>
    <property type="match status" value="1"/>
</dbReference>
<dbReference type="Gene3D" id="3.40.50.2300">
    <property type="match status" value="2"/>
</dbReference>
<dbReference type="InterPro" id="IPR028081">
    <property type="entry name" value="Leu-bd"/>
</dbReference>
<dbReference type="InterPro" id="IPR000709">
    <property type="entry name" value="Leu_Ile_Val-bd"/>
</dbReference>
<dbReference type="InterPro" id="IPR028082">
    <property type="entry name" value="Peripla_BP_I"/>
</dbReference>
<dbReference type="PANTHER" id="PTHR47151:SF2">
    <property type="entry name" value="AMINO ACID BINDING PROTEIN"/>
    <property type="match status" value="1"/>
</dbReference>
<dbReference type="PANTHER" id="PTHR47151">
    <property type="entry name" value="LEU/ILE/VAL-BINDING ABC TRANSPORTER SUBUNIT"/>
    <property type="match status" value="1"/>
</dbReference>
<dbReference type="Pfam" id="PF13458">
    <property type="entry name" value="Peripla_BP_6"/>
    <property type="match status" value="1"/>
</dbReference>
<dbReference type="PRINTS" id="PR00337">
    <property type="entry name" value="LEUILEVALBP"/>
</dbReference>
<dbReference type="SUPFAM" id="SSF53822">
    <property type="entry name" value="Periplasmic binding protein-like I"/>
    <property type="match status" value="1"/>
</dbReference>